<evidence type="ECO:0000255" key="1">
    <source>
        <dbReference type="PROSITE-ProRule" id="PRU01321"/>
    </source>
</evidence>
<evidence type="ECO:0000269" key="2">
    <source>
    </source>
</evidence>
<evidence type="ECO:0000269" key="3">
    <source>
    </source>
</evidence>
<evidence type="ECO:0000269" key="4">
    <source>
    </source>
</evidence>
<evidence type="ECO:0000303" key="5">
    <source>
    </source>
</evidence>
<evidence type="ECO:0000305" key="6"/>
<feature type="chain" id="PRO_0000096531" description="Protein YehF">
    <location>
        <begin position="1"/>
        <end position="274"/>
    </location>
</feature>
<feature type="domain" description="WGR" evidence="1">
    <location>
        <begin position="2"/>
        <end position="78"/>
    </location>
</feature>
<protein>
    <recommendedName>
        <fullName>Protein YehF</fullName>
    </recommendedName>
</protein>
<organism>
    <name type="scientific">Escherichia coli (strain K12)</name>
    <dbReference type="NCBI Taxonomy" id="83333"/>
    <lineage>
        <taxon>Bacteria</taxon>
        <taxon>Pseudomonadati</taxon>
        <taxon>Pseudomonadota</taxon>
        <taxon>Gammaproteobacteria</taxon>
        <taxon>Enterobacterales</taxon>
        <taxon>Enterobacteriaceae</taxon>
        <taxon>Escherichia</taxon>
    </lineage>
</organism>
<proteinExistence type="evidence at protein level"/>
<gene>
    <name type="primary">yehF</name>
    <name type="synonym">dinO</name>
    <name evidence="5" type="synonym">molR</name>
    <name type="synonym">sosF</name>
    <name type="ordered locus">b2115</name>
    <name type="ORF">b2116/b2117</name>
    <name type="ORF">b4499</name>
</gene>
<comment type="function">
    <text evidence="3">Has been implicated in selenate reduction; a mini-Tn10 insertion mutant in 'molR', (which was mapped to 47.3 centisomes i.e. this locus), is defective in the reduction of selenate.</text>
</comment>
<comment type="induction">
    <text evidence="2">Repressed by LexA, induced by DNA damage.</text>
</comment>
<comment type="caution">
    <text evidence="4 6">Was originally thought to be involved in the regulation of molybdate metabolism, which gave rise to the name molR, however the locus in PubMed:2156810 was mapped at 65 centisomes (minutes) on the E.coli chromosome, while this locus maps to 47.3 centisomes (PubMed:2156810). This locus gives rise to a transcript that could encode the 'interrupted' N-terminal 274 amino acid gene product of yehF. The protein it encodes (shown here) is missing the C-terminus compared to orthologs.</text>
</comment>
<reference key="1">
    <citation type="submission" date="1993-10" db="EMBL/GenBank/DDBJ databases">
        <title>Automated multiplex sequencing of the E.coli genome.</title>
        <authorList>
            <person name="Richterich P."/>
            <person name="Lakey N."/>
            <person name="Gryan G."/>
            <person name="Jaehn L."/>
            <person name="Mintz L."/>
            <person name="Robison K."/>
            <person name="Church G.M."/>
        </authorList>
    </citation>
    <scope>NUCLEOTIDE SEQUENCE [LARGE SCALE GENOMIC DNA]</scope>
    <source>
        <strain>K12 / BHB2600</strain>
    </source>
</reference>
<reference key="2">
    <citation type="journal article" date="1997" name="Science">
        <title>The complete genome sequence of Escherichia coli K-12.</title>
        <authorList>
            <person name="Blattner F.R."/>
            <person name="Plunkett G. III"/>
            <person name="Bloch C.A."/>
            <person name="Perna N.T."/>
            <person name="Burland V."/>
            <person name="Riley M."/>
            <person name="Collado-Vides J."/>
            <person name="Glasner J.D."/>
            <person name="Rode C.K."/>
            <person name="Mayhew G.F."/>
            <person name="Gregor J."/>
            <person name="Davis N.W."/>
            <person name="Kirkpatrick H.A."/>
            <person name="Goeden M.A."/>
            <person name="Rose D.J."/>
            <person name="Mau B."/>
            <person name="Shao Y."/>
        </authorList>
    </citation>
    <scope>NUCLEOTIDE SEQUENCE [LARGE SCALE GENOMIC DNA]</scope>
    <source>
        <strain>K12 / MG1655 / ATCC 47076</strain>
    </source>
</reference>
<reference key="3">
    <citation type="journal article" date="1990" name="J. Bacteriol.">
        <title>Identification of a new gene, molR, essential for utilization of molybdate by Escherichia coli.</title>
        <authorList>
            <person name="Lee J.H."/>
            <person name="Wendt J.C."/>
            <person name="Shanmugam K.T."/>
        </authorList>
    </citation>
    <scope>NOMENCLATURE</scope>
    <source>
        <strain>K12 / BW545</strain>
    </source>
</reference>
<reference key="4">
    <citation type="unpublished observations" date="1994-02">
        <authorList>
            <person name="Healy F."/>
            <person name="Grunden A."/>
            <person name="Ray R.M."/>
            <person name="Shanmugam K.T."/>
        </authorList>
    </citation>
    <scope>CHARACTERIZATION</scope>
</reference>
<reference key="5">
    <citation type="journal article" date="2000" name="Mol. Microbiol.">
        <title>Identification of additional genes belonging to the LexA regulon in Escherichia coli.</title>
        <authorList>
            <person name="Fernandez De Henestrosa A.R."/>
            <person name="Ogi T."/>
            <person name="Aoyagi S."/>
            <person name="Chafin D."/>
            <person name="Hayes J.J."/>
            <person name="Ohmori H."/>
            <person name="Woodgate R."/>
        </authorList>
    </citation>
    <scope>INDUCTION BY LEXA</scope>
    <source>
        <strain>K12 / RW118</strain>
    </source>
</reference>
<reference key="6">
    <citation type="journal article" date="2002" name="Microbiology">
        <title>Involvement of a putative molybdenum enzyme in the reduction of selenate by Escherichia coli.</title>
        <authorList>
            <person name="Bebien M."/>
            <person name="Kirsch J."/>
            <person name="Mejean V."/>
            <person name="Vermeglio A."/>
        </authorList>
    </citation>
    <scope>POTENTIAL INVOLVEMENT IN SELENATE REDUCTION</scope>
    <source>
        <strain>K12 / MC4100 / ATCC 35695 / DSM 6574</strain>
    </source>
</reference>
<name>YEHF_ECOLI</name>
<accession>P33345</accession>
<accession>A0A385XJW5</accession>
<accession>P76427</accession>
<accession>P76428</accession>
<accession>P76429</accession>
<dbReference type="EMBL" id="U00007">
    <property type="protein sequence ID" value="AAA60477.1"/>
    <property type="molecule type" value="Genomic_DNA"/>
</dbReference>
<dbReference type="EMBL" id="U00096">
    <property type="protein sequence ID" value="AYC08227.1"/>
    <property type="molecule type" value="Genomic_DNA"/>
</dbReference>
<dbReference type="SMR" id="P33345"/>
<dbReference type="FunCoup" id="P33345">
    <property type="interactions" value="53"/>
</dbReference>
<dbReference type="IntAct" id="P33345">
    <property type="interactions" value="8"/>
</dbReference>
<dbReference type="EnsemblBacteria" id="AYC08227">
    <property type="protein sequence ID" value="AYC08227"/>
    <property type="gene ID" value="b2115"/>
</dbReference>
<dbReference type="KEGG" id="ecoc:C3026_11865"/>
<dbReference type="EchoBASE" id="EB1935"/>
<dbReference type="InParanoid" id="P33345"/>
<dbReference type="BioCyc" id="EcoCyc:EG11992-MONOMER"/>
<dbReference type="PRO" id="PR:P33345"/>
<dbReference type="Proteomes" id="UP000000625">
    <property type="component" value="Chromosome"/>
</dbReference>
<dbReference type="CDD" id="cd07996">
    <property type="entry name" value="WGR_MMR_like"/>
    <property type="match status" value="1"/>
</dbReference>
<dbReference type="Gene3D" id="2.20.140.10">
    <property type="entry name" value="WGR domain"/>
    <property type="match status" value="1"/>
</dbReference>
<dbReference type="InterPro" id="IPR050458">
    <property type="entry name" value="LolB"/>
</dbReference>
<dbReference type="InterPro" id="IPR036930">
    <property type="entry name" value="WGR_dom_sf"/>
</dbReference>
<dbReference type="InterPro" id="IPR008893">
    <property type="entry name" value="WGR_domain"/>
</dbReference>
<dbReference type="InterPro" id="IPR049809">
    <property type="entry name" value="YehF/YfeS-like_WGR"/>
</dbReference>
<dbReference type="PANTHER" id="PTHR30634">
    <property type="entry name" value="OUTER MEMBRANE LOLAB LIPOPROTEIN INSERTION APPARATUS"/>
    <property type="match status" value="1"/>
</dbReference>
<dbReference type="PANTHER" id="PTHR30634:SF13">
    <property type="entry name" value="PROTEIN YEHF"/>
    <property type="match status" value="1"/>
</dbReference>
<dbReference type="Pfam" id="PF05406">
    <property type="entry name" value="WGR"/>
    <property type="match status" value="1"/>
</dbReference>
<dbReference type="SMART" id="SM00773">
    <property type="entry name" value="WGR"/>
    <property type="match status" value="1"/>
</dbReference>
<dbReference type="SUPFAM" id="SSF142921">
    <property type="entry name" value="WGR domain-like"/>
    <property type="match status" value="1"/>
</dbReference>
<dbReference type="PROSITE" id="PS51977">
    <property type="entry name" value="WGR"/>
    <property type="match status" value="1"/>
</dbReference>
<keyword id="KW-1185">Reference proteome</keyword>
<sequence>MRHFIYQDEKSHKFRAVEQQGNELHISWGKVGTKGQSQIKSFSDAAAAAKAELKLIAEKVKKGYVEQAKDNSLQPSQTVTGSLKVADLSTIIQEQPSFVAETRAPDKNTDAVLPWLAKDIAVVFPPEVVHTTLSHRRFPGVPVQQADKLPQLRRLACSVSQRDNKTATFDFSACSLEWQNTVAQAISQIDGLKTTQLPSPVMAVLTALEMKCTRYKVREDVMDQIVQEGGLEYATDVIIHLQQIDIEWDYANNVIIILPSGIAPSYLEQYSRFE</sequence>